<comment type="function">
    <text evidence="2">Molecular adapter that stimulates membrane curvature formation and subsequent endoplasmic reticulum exit site (ERES) establishment by recruiting PI3K complex I, leading to COPII vesicle-mediated transport (By similarity). Promotes endoplasmic reticulum (ER) exit of cGAMP-activated STING1 oligomers (By similarity).</text>
</comment>
<comment type="subcellular location">
    <subcellularLocation>
        <location evidence="1">Cytoplasm</location>
    </subcellularLocation>
    <subcellularLocation>
        <location evidence="2">Nucleus</location>
    </subcellularLocation>
</comment>
<comment type="alternative products">
    <event type="alternative splicing"/>
    <isoform>
        <id>Q5U515-1</id>
        <name>1</name>
        <sequence type="displayed"/>
    </isoform>
    <isoform>
        <id>Q5U515-2</id>
        <name>2</name>
        <sequence type="described" ref="VSP_025570"/>
    </isoform>
</comment>
<comment type="similarity">
    <text evidence="5">Belongs to the STEEP1 family.</text>
</comment>
<feature type="chain" id="PRO_0000287613" description="STING ER exit protein">
    <location>
        <begin position="1"/>
        <end position="222"/>
    </location>
</feature>
<feature type="coiled-coil region" evidence="3">
    <location>
        <begin position="170"/>
        <end position="220"/>
    </location>
</feature>
<feature type="splice variant" id="VSP_025570" description="In isoform 2." evidence="4">
    <location>
        <begin position="143"/>
        <end position="222"/>
    </location>
</feature>
<reference key="1">
    <citation type="submission" date="2004-10" db="EMBL/GenBank/DDBJ databases">
        <authorList>
            <consortium name="NIH - Xenopus Gene Collection (XGC) project"/>
        </authorList>
    </citation>
    <scope>NUCLEOTIDE SEQUENCE [LARGE SCALE MRNA] (ISOFORMS 1 AND 2)</scope>
    <source>
        <tissue>Embryo</tissue>
    </source>
</reference>
<evidence type="ECO:0000250" key="1">
    <source>
        <dbReference type="UniProtKB" id="Q8VDP2"/>
    </source>
</evidence>
<evidence type="ECO:0000250" key="2">
    <source>
        <dbReference type="UniProtKB" id="Q9H5V9"/>
    </source>
</evidence>
<evidence type="ECO:0000255" key="3"/>
<evidence type="ECO:0000303" key="4">
    <source ref="1"/>
</evidence>
<evidence type="ECO:0000305" key="5"/>
<name>STEEP_XENLA</name>
<protein>
    <recommendedName>
        <fullName evidence="2">STING ER exit protein</fullName>
        <shortName evidence="2">STEEP</shortName>
    </recommendedName>
</protein>
<proteinExistence type="evidence at transcript level"/>
<dbReference type="EMBL" id="BC046270">
    <property type="protein sequence ID" value="AAH46270.1"/>
    <property type="molecule type" value="mRNA"/>
</dbReference>
<dbReference type="EMBL" id="BC084870">
    <property type="protein sequence ID" value="AAH84870.1"/>
    <property type="molecule type" value="mRNA"/>
</dbReference>
<dbReference type="RefSeq" id="NP_001079192.1">
    <molecule id="Q5U515-1"/>
    <property type="nucleotide sequence ID" value="NM_001085723.1"/>
</dbReference>
<dbReference type="SMR" id="Q5U515"/>
<dbReference type="DNASU" id="373791"/>
<dbReference type="GeneID" id="373791"/>
<dbReference type="KEGG" id="xla:373791"/>
<dbReference type="AGR" id="Xenbase:XB-GENE-5808712"/>
<dbReference type="CTD" id="373791"/>
<dbReference type="Xenbase" id="XB-GENE-5808712">
    <property type="gene designation" value="steep1.L"/>
</dbReference>
<dbReference type="OrthoDB" id="418131at2759"/>
<dbReference type="Proteomes" id="UP000186698">
    <property type="component" value="Chromosome 8S"/>
</dbReference>
<dbReference type="Bgee" id="373791">
    <property type="expression patterns" value="Expressed in gastrula and 19 other cell types or tissues"/>
</dbReference>
<dbReference type="GO" id="GO:0044297">
    <property type="term" value="C:cell body"/>
    <property type="evidence" value="ECO:0000250"/>
    <property type="project" value="UniProtKB"/>
</dbReference>
<dbReference type="GO" id="GO:0005737">
    <property type="term" value="C:cytoplasm"/>
    <property type="evidence" value="ECO:0000250"/>
    <property type="project" value="UniProtKB"/>
</dbReference>
<dbReference type="GO" id="GO:0005634">
    <property type="term" value="C:nucleus"/>
    <property type="evidence" value="ECO:0000250"/>
    <property type="project" value="UniProtKB"/>
</dbReference>
<dbReference type="GO" id="GO:0030674">
    <property type="term" value="F:protein-macromolecule adaptor activity"/>
    <property type="evidence" value="ECO:0000250"/>
    <property type="project" value="UniProtKB"/>
</dbReference>
<dbReference type="GO" id="GO:0090158">
    <property type="term" value="P:endoplasmic reticulum membrane organization"/>
    <property type="evidence" value="ECO:0000250"/>
    <property type="project" value="UniProtKB"/>
</dbReference>
<dbReference type="GO" id="GO:0006888">
    <property type="term" value="P:endoplasmic reticulum to Golgi vesicle-mediated transport"/>
    <property type="evidence" value="ECO:0000250"/>
    <property type="project" value="UniProtKB"/>
</dbReference>
<dbReference type="GO" id="GO:0032527">
    <property type="term" value="P:protein exit from endoplasmic reticulum"/>
    <property type="evidence" value="ECO:0000250"/>
    <property type="project" value="UniProtKB"/>
</dbReference>
<dbReference type="InterPro" id="IPR029704">
    <property type="entry name" value="STEEP-like"/>
</dbReference>
<dbReference type="PANTHER" id="PTHR46355:SF1">
    <property type="entry name" value="STING ER EXIT PROTEIN"/>
    <property type="match status" value="1"/>
</dbReference>
<dbReference type="PANTHER" id="PTHR46355">
    <property type="entry name" value="UPF0428 PROTEIN CXORF56"/>
    <property type="match status" value="1"/>
</dbReference>
<gene>
    <name evidence="2" type="primary">steep1</name>
</gene>
<keyword id="KW-0025">Alternative splicing</keyword>
<keyword id="KW-0175">Coiled coil</keyword>
<keyword id="KW-0963">Cytoplasm</keyword>
<keyword id="KW-0539">Nucleus</keyword>
<keyword id="KW-1185">Reference proteome</keyword>
<sequence length="222" mass="25493">MPKVVSRSVVCSDTRDREEYDDGEKPLHVYYCLCGQMVLVLDCQLEKLPMRPRDRARVIGAAKHAHKFCNTEEEEPVYLRRSDGIERQYRKKCSKCSLLLFYQHSQKNAAATFIVNGALVKFGQGFGKTSIYTQKPDPPKKVMMTKRTKDMGKFSSVTVSTIDEEEEEIEAREVADSYAQNAKVIEKQLERKGMSKRRLQELAELEAKKAKMKGTLIDNQFK</sequence>
<accession>Q5U515</accession>
<accession>Q7ZX08</accession>
<organism>
    <name type="scientific">Xenopus laevis</name>
    <name type="common">African clawed frog</name>
    <dbReference type="NCBI Taxonomy" id="8355"/>
    <lineage>
        <taxon>Eukaryota</taxon>
        <taxon>Metazoa</taxon>
        <taxon>Chordata</taxon>
        <taxon>Craniata</taxon>
        <taxon>Vertebrata</taxon>
        <taxon>Euteleostomi</taxon>
        <taxon>Amphibia</taxon>
        <taxon>Batrachia</taxon>
        <taxon>Anura</taxon>
        <taxon>Pipoidea</taxon>
        <taxon>Pipidae</taxon>
        <taxon>Xenopodinae</taxon>
        <taxon>Xenopus</taxon>
        <taxon>Xenopus</taxon>
    </lineage>
</organism>